<proteinExistence type="inferred from homology"/>
<sequence length="878" mass="97773">MSNERYNARESEPKWQAKWDEAKIFATRNDDPRPKYYVLEMFPYPSGRIHMGHVRNYTMGDVVARTMRARGHNVLHPMGWDAFGLPAENAAIERKVAPKAWTYANIAAMKKQLQTMGLSLDWAREFATCDPTYYKHQQKMFLDFLKAGLAERETRKLNWDPVDMTVLANEQVIDGRGWRSGAVVEQREMNQWVFKITRYAQELLDALETLDRWPDKVRLMQRNWIGRSEGLLVRFALDSATTPAGETELKIFTTRPDTLFGAKFMAIAADHPLAQAAAAKDPKIAAFVEDCKKRGTAQAEIDTAEKLGIDTGIRALHPFDPNWQIPVYVANFVLMEYGTGAIFGCPAHDQRDLDFVNKYQLGNTPVVCPEGQDPSSFVITDEAYDGDGRLINSRFLDGMSIAEAKEDVAKRLETATLGNAPVGERKVNFRLRDWGISRQRYWGCPIPVIHCEVCGVVPVPDKDLPVVLPEDVSFDKPGNALDHHPTWKHTACPQCGAKATRETDTMDTFVDSSWYFARFTDPWNENAPTTPDVVNRMLPVDQYIGGVEHAILHLLYSRFFTRAMKATGHVGLDEPFRGMFTQGMVVHETYRKADGMFASPAEVAIVAEGDGRRATLLDDGTPIEIGPIEKMSKSKRNTVDPDDIIGSYGADTARWFMLSDSPPDRDVIWSEEGVKGASRFVQRLWRMINDAAEIAKAAPAARPDAFGPEALAVRKAAHGALDKVLSGIERLAFNVSLAHIREFSNSLGEALARPGAASPDVAPDLAWAIREGAVILVQLFHPMMPHLAEECWAALGQPGLVSEALWPQIERDLLLEDSITLPVQVNGKKRGEVTVARDANNPEIEAAVLALDAVRQALDGKPVRKVIVVPQRIVNVVG</sequence>
<name>SYL_RHOPS</name>
<accession>Q13E15</accession>
<comment type="catalytic activity">
    <reaction evidence="1">
        <text>tRNA(Leu) + L-leucine + ATP = L-leucyl-tRNA(Leu) + AMP + diphosphate</text>
        <dbReference type="Rhea" id="RHEA:11688"/>
        <dbReference type="Rhea" id="RHEA-COMP:9613"/>
        <dbReference type="Rhea" id="RHEA-COMP:9622"/>
        <dbReference type="ChEBI" id="CHEBI:30616"/>
        <dbReference type="ChEBI" id="CHEBI:33019"/>
        <dbReference type="ChEBI" id="CHEBI:57427"/>
        <dbReference type="ChEBI" id="CHEBI:78442"/>
        <dbReference type="ChEBI" id="CHEBI:78494"/>
        <dbReference type="ChEBI" id="CHEBI:456215"/>
        <dbReference type="EC" id="6.1.1.4"/>
    </reaction>
</comment>
<comment type="subcellular location">
    <subcellularLocation>
        <location evidence="1">Cytoplasm</location>
    </subcellularLocation>
</comment>
<comment type="similarity">
    <text evidence="1">Belongs to the class-I aminoacyl-tRNA synthetase family.</text>
</comment>
<reference key="1">
    <citation type="submission" date="2006-03" db="EMBL/GenBank/DDBJ databases">
        <title>Complete sequence of Rhodopseudomonas palustris BisB5.</title>
        <authorList>
            <consortium name="US DOE Joint Genome Institute"/>
            <person name="Copeland A."/>
            <person name="Lucas S."/>
            <person name="Lapidus A."/>
            <person name="Barry K."/>
            <person name="Detter J.C."/>
            <person name="Glavina del Rio T."/>
            <person name="Hammon N."/>
            <person name="Israni S."/>
            <person name="Dalin E."/>
            <person name="Tice H."/>
            <person name="Pitluck S."/>
            <person name="Chain P."/>
            <person name="Malfatti S."/>
            <person name="Shin M."/>
            <person name="Vergez L."/>
            <person name="Schmutz J."/>
            <person name="Larimer F."/>
            <person name="Land M."/>
            <person name="Hauser L."/>
            <person name="Pelletier D.A."/>
            <person name="Kyrpides N."/>
            <person name="Lykidis A."/>
            <person name="Oda Y."/>
            <person name="Harwood C.S."/>
            <person name="Richardson P."/>
        </authorList>
    </citation>
    <scope>NUCLEOTIDE SEQUENCE [LARGE SCALE GENOMIC DNA]</scope>
    <source>
        <strain>BisB5</strain>
    </source>
</reference>
<protein>
    <recommendedName>
        <fullName evidence="1">Leucine--tRNA ligase</fullName>
        <ecNumber evidence="1">6.1.1.4</ecNumber>
    </recommendedName>
    <alternativeName>
        <fullName evidence="1">Leucyl-tRNA synthetase</fullName>
        <shortName evidence="1">LeuRS</shortName>
    </alternativeName>
</protein>
<evidence type="ECO:0000255" key="1">
    <source>
        <dbReference type="HAMAP-Rule" id="MF_00049"/>
    </source>
</evidence>
<keyword id="KW-0030">Aminoacyl-tRNA synthetase</keyword>
<keyword id="KW-0067">ATP-binding</keyword>
<keyword id="KW-0963">Cytoplasm</keyword>
<keyword id="KW-0436">Ligase</keyword>
<keyword id="KW-0547">Nucleotide-binding</keyword>
<keyword id="KW-0648">Protein biosynthesis</keyword>
<gene>
    <name evidence="1" type="primary">leuS</name>
    <name type="ordered locus">RPD_0436</name>
</gene>
<dbReference type="EC" id="6.1.1.4" evidence="1"/>
<dbReference type="EMBL" id="CP000283">
    <property type="protein sequence ID" value="ABE37674.1"/>
    <property type="molecule type" value="Genomic_DNA"/>
</dbReference>
<dbReference type="SMR" id="Q13E15"/>
<dbReference type="STRING" id="316057.RPD_0436"/>
<dbReference type="KEGG" id="rpd:RPD_0436"/>
<dbReference type="eggNOG" id="COG0495">
    <property type="taxonomic scope" value="Bacteria"/>
</dbReference>
<dbReference type="HOGENOM" id="CLU_004427_0_0_5"/>
<dbReference type="BioCyc" id="RPAL316057:RPD_RS02240-MONOMER"/>
<dbReference type="Proteomes" id="UP000001818">
    <property type="component" value="Chromosome"/>
</dbReference>
<dbReference type="GO" id="GO:0005829">
    <property type="term" value="C:cytosol"/>
    <property type="evidence" value="ECO:0007669"/>
    <property type="project" value="TreeGrafter"/>
</dbReference>
<dbReference type="GO" id="GO:0002161">
    <property type="term" value="F:aminoacyl-tRNA deacylase activity"/>
    <property type="evidence" value="ECO:0007669"/>
    <property type="project" value="InterPro"/>
</dbReference>
<dbReference type="GO" id="GO:0005524">
    <property type="term" value="F:ATP binding"/>
    <property type="evidence" value="ECO:0007669"/>
    <property type="project" value="UniProtKB-UniRule"/>
</dbReference>
<dbReference type="GO" id="GO:0004823">
    <property type="term" value="F:leucine-tRNA ligase activity"/>
    <property type="evidence" value="ECO:0007669"/>
    <property type="project" value="UniProtKB-UniRule"/>
</dbReference>
<dbReference type="GO" id="GO:0006429">
    <property type="term" value="P:leucyl-tRNA aminoacylation"/>
    <property type="evidence" value="ECO:0007669"/>
    <property type="project" value="UniProtKB-UniRule"/>
</dbReference>
<dbReference type="CDD" id="cd07958">
    <property type="entry name" value="Anticodon_Ia_Leu_BEm"/>
    <property type="match status" value="1"/>
</dbReference>
<dbReference type="CDD" id="cd00812">
    <property type="entry name" value="LeuRS_core"/>
    <property type="match status" value="1"/>
</dbReference>
<dbReference type="FunFam" id="1.10.730.10:FF:000002">
    <property type="entry name" value="Leucine--tRNA ligase"/>
    <property type="match status" value="1"/>
</dbReference>
<dbReference type="FunFam" id="3.10.20.590:FF:000001">
    <property type="entry name" value="Leucine--tRNA ligase"/>
    <property type="match status" value="1"/>
</dbReference>
<dbReference type="FunFam" id="3.40.50.620:FF:000003">
    <property type="entry name" value="Leucine--tRNA ligase"/>
    <property type="match status" value="1"/>
</dbReference>
<dbReference type="Gene3D" id="2.20.28.290">
    <property type="match status" value="1"/>
</dbReference>
<dbReference type="Gene3D" id="3.10.20.590">
    <property type="match status" value="1"/>
</dbReference>
<dbReference type="Gene3D" id="3.40.50.620">
    <property type="entry name" value="HUPs"/>
    <property type="match status" value="2"/>
</dbReference>
<dbReference type="Gene3D" id="1.10.730.10">
    <property type="entry name" value="Isoleucyl-tRNA Synthetase, Domain 1"/>
    <property type="match status" value="1"/>
</dbReference>
<dbReference type="HAMAP" id="MF_00049_B">
    <property type="entry name" value="Leu_tRNA_synth_B"/>
    <property type="match status" value="1"/>
</dbReference>
<dbReference type="InterPro" id="IPR001412">
    <property type="entry name" value="aa-tRNA-synth_I_CS"/>
</dbReference>
<dbReference type="InterPro" id="IPR002300">
    <property type="entry name" value="aa-tRNA-synth_Ia"/>
</dbReference>
<dbReference type="InterPro" id="IPR002302">
    <property type="entry name" value="Leu-tRNA-ligase"/>
</dbReference>
<dbReference type="InterPro" id="IPR025709">
    <property type="entry name" value="Leu_tRNA-synth_edit"/>
</dbReference>
<dbReference type="InterPro" id="IPR013155">
    <property type="entry name" value="M/V/L/I-tRNA-synth_anticd-bd"/>
</dbReference>
<dbReference type="InterPro" id="IPR015413">
    <property type="entry name" value="Methionyl/Leucyl_tRNA_Synth"/>
</dbReference>
<dbReference type="InterPro" id="IPR014729">
    <property type="entry name" value="Rossmann-like_a/b/a_fold"/>
</dbReference>
<dbReference type="InterPro" id="IPR009080">
    <property type="entry name" value="tRNAsynth_Ia_anticodon-bd"/>
</dbReference>
<dbReference type="InterPro" id="IPR009008">
    <property type="entry name" value="Val/Leu/Ile-tRNA-synth_edit"/>
</dbReference>
<dbReference type="NCBIfam" id="TIGR00396">
    <property type="entry name" value="leuS_bact"/>
    <property type="match status" value="1"/>
</dbReference>
<dbReference type="PANTHER" id="PTHR43740:SF2">
    <property type="entry name" value="LEUCINE--TRNA LIGASE, MITOCHONDRIAL"/>
    <property type="match status" value="1"/>
</dbReference>
<dbReference type="PANTHER" id="PTHR43740">
    <property type="entry name" value="LEUCYL-TRNA SYNTHETASE"/>
    <property type="match status" value="1"/>
</dbReference>
<dbReference type="Pfam" id="PF08264">
    <property type="entry name" value="Anticodon_1"/>
    <property type="match status" value="1"/>
</dbReference>
<dbReference type="Pfam" id="PF00133">
    <property type="entry name" value="tRNA-synt_1"/>
    <property type="match status" value="2"/>
</dbReference>
<dbReference type="Pfam" id="PF13603">
    <property type="entry name" value="tRNA-synt_1_2"/>
    <property type="match status" value="1"/>
</dbReference>
<dbReference type="Pfam" id="PF09334">
    <property type="entry name" value="tRNA-synt_1g"/>
    <property type="match status" value="1"/>
</dbReference>
<dbReference type="PRINTS" id="PR00985">
    <property type="entry name" value="TRNASYNTHLEU"/>
</dbReference>
<dbReference type="SUPFAM" id="SSF47323">
    <property type="entry name" value="Anticodon-binding domain of a subclass of class I aminoacyl-tRNA synthetases"/>
    <property type="match status" value="1"/>
</dbReference>
<dbReference type="SUPFAM" id="SSF52374">
    <property type="entry name" value="Nucleotidylyl transferase"/>
    <property type="match status" value="1"/>
</dbReference>
<dbReference type="SUPFAM" id="SSF50677">
    <property type="entry name" value="ValRS/IleRS/LeuRS editing domain"/>
    <property type="match status" value="1"/>
</dbReference>
<dbReference type="PROSITE" id="PS00178">
    <property type="entry name" value="AA_TRNA_LIGASE_I"/>
    <property type="match status" value="1"/>
</dbReference>
<organism>
    <name type="scientific">Rhodopseudomonas palustris (strain BisB5)</name>
    <dbReference type="NCBI Taxonomy" id="316057"/>
    <lineage>
        <taxon>Bacteria</taxon>
        <taxon>Pseudomonadati</taxon>
        <taxon>Pseudomonadota</taxon>
        <taxon>Alphaproteobacteria</taxon>
        <taxon>Hyphomicrobiales</taxon>
        <taxon>Nitrobacteraceae</taxon>
        <taxon>Rhodopseudomonas</taxon>
    </lineage>
</organism>
<feature type="chain" id="PRO_1000009412" description="Leucine--tRNA ligase">
    <location>
        <begin position="1"/>
        <end position="878"/>
    </location>
</feature>
<feature type="short sequence motif" description="'HIGH' region">
    <location>
        <begin position="43"/>
        <end position="53"/>
    </location>
</feature>
<feature type="short sequence motif" description="'KMSKS' region">
    <location>
        <begin position="630"/>
        <end position="634"/>
    </location>
</feature>
<feature type="binding site" evidence="1">
    <location>
        <position position="633"/>
    </location>
    <ligand>
        <name>ATP</name>
        <dbReference type="ChEBI" id="CHEBI:30616"/>
    </ligand>
</feature>